<reference key="1">
    <citation type="submission" date="2008-05" db="EMBL/GenBank/DDBJ databases">
        <title>Complete sequence of Chlorobium limicola DSM 245.</title>
        <authorList>
            <consortium name="US DOE Joint Genome Institute"/>
            <person name="Lucas S."/>
            <person name="Copeland A."/>
            <person name="Lapidus A."/>
            <person name="Glavina del Rio T."/>
            <person name="Dalin E."/>
            <person name="Tice H."/>
            <person name="Bruce D."/>
            <person name="Goodwin L."/>
            <person name="Pitluck S."/>
            <person name="Schmutz J."/>
            <person name="Larimer F."/>
            <person name="Land M."/>
            <person name="Hauser L."/>
            <person name="Kyrpides N."/>
            <person name="Ovchinnikova G."/>
            <person name="Zhao F."/>
            <person name="Li T."/>
            <person name="Liu Z."/>
            <person name="Overmann J."/>
            <person name="Bryant D.A."/>
            <person name="Richardson P."/>
        </authorList>
    </citation>
    <scope>NUCLEOTIDE SEQUENCE [LARGE SCALE GENOMIC DNA]</scope>
    <source>
        <strain>DSM 245 / NBRC 103803 / 6330</strain>
    </source>
</reference>
<evidence type="ECO:0000255" key="1">
    <source>
        <dbReference type="HAMAP-Rule" id="MF_00031"/>
    </source>
</evidence>
<protein>
    <recommendedName>
        <fullName evidence="1">Holliday junction branch migration complex subunit RuvA</fullName>
    </recommendedName>
</protein>
<proteinExistence type="inferred from homology"/>
<organism>
    <name type="scientific">Chlorobium limicola (strain DSM 245 / NBRC 103803 / 6330)</name>
    <dbReference type="NCBI Taxonomy" id="290315"/>
    <lineage>
        <taxon>Bacteria</taxon>
        <taxon>Pseudomonadati</taxon>
        <taxon>Chlorobiota</taxon>
        <taxon>Chlorobiia</taxon>
        <taxon>Chlorobiales</taxon>
        <taxon>Chlorobiaceae</taxon>
        <taxon>Chlorobium/Pelodictyon group</taxon>
        <taxon>Chlorobium</taxon>
    </lineage>
</organism>
<comment type="function">
    <text evidence="1">The RuvA-RuvB-RuvC complex processes Holliday junction (HJ) DNA during genetic recombination and DNA repair, while the RuvA-RuvB complex plays an important role in the rescue of blocked DNA replication forks via replication fork reversal (RFR). RuvA specifically binds to HJ cruciform DNA, conferring on it an open structure. The RuvB hexamer acts as an ATP-dependent pump, pulling dsDNA into and through the RuvAB complex. HJ branch migration allows RuvC to scan DNA until it finds its consensus sequence, where it cleaves and resolves the cruciform DNA.</text>
</comment>
<comment type="subunit">
    <text evidence="1">Homotetramer. Forms an RuvA(8)-RuvB(12)-Holliday junction (HJ) complex. HJ DNA is sandwiched between 2 RuvA tetramers; dsDNA enters through RuvA and exits via RuvB. An RuvB hexamer assembles on each DNA strand where it exits the tetramer. Each RuvB hexamer is contacted by two RuvA subunits (via domain III) on 2 adjacent RuvB subunits; this complex drives branch migration. In the full resolvosome a probable DNA-RuvA(4)-RuvB(12)-RuvC(2) complex forms which resolves the HJ.</text>
</comment>
<comment type="subcellular location">
    <subcellularLocation>
        <location evidence="1">Cytoplasm</location>
    </subcellularLocation>
</comment>
<comment type="domain">
    <text evidence="1">Has three domains with a flexible linker between the domains II and III and assumes an 'L' shape. Domain III is highly mobile and contacts RuvB.</text>
</comment>
<comment type="similarity">
    <text evidence="1">Belongs to the RuvA family.</text>
</comment>
<gene>
    <name evidence="1" type="primary">ruvA</name>
    <name type="ordered locus">Clim_0321</name>
</gene>
<name>RUVA_CHLL2</name>
<dbReference type="EMBL" id="CP001097">
    <property type="protein sequence ID" value="ACD89415.1"/>
    <property type="molecule type" value="Genomic_DNA"/>
</dbReference>
<dbReference type="RefSeq" id="WP_012465296.1">
    <property type="nucleotide sequence ID" value="NC_010803.1"/>
</dbReference>
<dbReference type="SMR" id="B3EFD2"/>
<dbReference type="STRING" id="290315.Clim_0321"/>
<dbReference type="KEGG" id="cli:Clim_0321"/>
<dbReference type="eggNOG" id="COG0632">
    <property type="taxonomic scope" value="Bacteria"/>
</dbReference>
<dbReference type="HOGENOM" id="CLU_087936_3_0_10"/>
<dbReference type="OrthoDB" id="5293449at2"/>
<dbReference type="Proteomes" id="UP000008841">
    <property type="component" value="Chromosome"/>
</dbReference>
<dbReference type="GO" id="GO:0005737">
    <property type="term" value="C:cytoplasm"/>
    <property type="evidence" value="ECO:0007669"/>
    <property type="project" value="UniProtKB-SubCell"/>
</dbReference>
<dbReference type="GO" id="GO:0009379">
    <property type="term" value="C:Holliday junction helicase complex"/>
    <property type="evidence" value="ECO:0007669"/>
    <property type="project" value="InterPro"/>
</dbReference>
<dbReference type="GO" id="GO:0048476">
    <property type="term" value="C:Holliday junction resolvase complex"/>
    <property type="evidence" value="ECO:0007669"/>
    <property type="project" value="UniProtKB-UniRule"/>
</dbReference>
<dbReference type="GO" id="GO:0005524">
    <property type="term" value="F:ATP binding"/>
    <property type="evidence" value="ECO:0007669"/>
    <property type="project" value="InterPro"/>
</dbReference>
<dbReference type="GO" id="GO:0000400">
    <property type="term" value="F:four-way junction DNA binding"/>
    <property type="evidence" value="ECO:0007669"/>
    <property type="project" value="UniProtKB-UniRule"/>
</dbReference>
<dbReference type="GO" id="GO:0009378">
    <property type="term" value="F:four-way junction helicase activity"/>
    <property type="evidence" value="ECO:0007669"/>
    <property type="project" value="InterPro"/>
</dbReference>
<dbReference type="GO" id="GO:0006310">
    <property type="term" value="P:DNA recombination"/>
    <property type="evidence" value="ECO:0007669"/>
    <property type="project" value="UniProtKB-UniRule"/>
</dbReference>
<dbReference type="GO" id="GO:0006281">
    <property type="term" value="P:DNA repair"/>
    <property type="evidence" value="ECO:0007669"/>
    <property type="project" value="UniProtKB-UniRule"/>
</dbReference>
<dbReference type="CDD" id="cd14332">
    <property type="entry name" value="UBA_RuvA_C"/>
    <property type="match status" value="1"/>
</dbReference>
<dbReference type="Gene3D" id="1.10.150.20">
    <property type="entry name" value="5' to 3' exonuclease, C-terminal subdomain"/>
    <property type="match status" value="1"/>
</dbReference>
<dbReference type="Gene3D" id="1.10.8.10">
    <property type="entry name" value="DNA helicase RuvA subunit, C-terminal domain"/>
    <property type="match status" value="1"/>
</dbReference>
<dbReference type="Gene3D" id="2.40.50.140">
    <property type="entry name" value="Nucleic acid-binding proteins"/>
    <property type="match status" value="1"/>
</dbReference>
<dbReference type="HAMAP" id="MF_00031">
    <property type="entry name" value="DNA_HJ_migration_RuvA"/>
    <property type="match status" value="1"/>
</dbReference>
<dbReference type="InterPro" id="IPR013849">
    <property type="entry name" value="DNA_helicase_Holl-junc_RuvA_I"/>
</dbReference>
<dbReference type="InterPro" id="IPR003583">
    <property type="entry name" value="Hlx-hairpin-Hlx_DNA-bd_motif"/>
</dbReference>
<dbReference type="InterPro" id="IPR012340">
    <property type="entry name" value="NA-bd_OB-fold"/>
</dbReference>
<dbReference type="InterPro" id="IPR000085">
    <property type="entry name" value="RuvA"/>
</dbReference>
<dbReference type="InterPro" id="IPR010994">
    <property type="entry name" value="RuvA_2-like"/>
</dbReference>
<dbReference type="InterPro" id="IPR011114">
    <property type="entry name" value="RuvA_C"/>
</dbReference>
<dbReference type="InterPro" id="IPR036267">
    <property type="entry name" value="RuvA_C_sf"/>
</dbReference>
<dbReference type="NCBIfam" id="TIGR00084">
    <property type="entry name" value="ruvA"/>
    <property type="match status" value="1"/>
</dbReference>
<dbReference type="Pfam" id="PF14520">
    <property type="entry name" value="HHH_5"/>
    <property type="match status" value="1"/>
</dbReference>
<dbReference type="Pfam" id="PF07499">
    <property type="entry name" value="RuvA_C"/>
    <property type="match status" value="1"/>
</dbReference>
<dbReference type="Pfam" id="PF01330">
    <property type="entry name" value="RuvA_N"/>
    <property type="match status" value="1"/>
</dbReference>
<dbReference type="SMART" id="SM00278">
    <property type="entry name" value="HhH1"/>
    <property type="match status" value="2"/>
</dbReference>
<dbReference type="SUPFAM" id="SSF46929">
    <property type="entry name" value="DNA helicase RuvA subunit, C-terminal domain"/>
    <property type="match status" value="1"/>
</dbReference>
<dbReference type="SUPFAM" id="SSF50249">
    <property type="entry name" value="Nucleic acid-binding proteins"/>
    <property type="match status" value="1"/>
</dbReference>
<dbReference type="SUPFAM" id="SSF47781">
    <property type="entry name" value="RuvA domain 2-like"/>
    <property type="match status" value="1"/>
</dbReference>
<feature type="chain" id="PRO_1000090296" description="Holliday junction branch migration complex subunit RuvA">
    <location>
        <begin position="1"/>
        <end position="203"/>
    </location>
</feature>
<feature type="region of interest" description="Domain I" evidence="1">
    <location>
        <begin position="1"/>
        <end position="64"/>
    </location>
</feature>
<feature type="region of interest" description="Domain II" evidence="1">
    <location>
        <begin position="65"/>
        <end position="143"/>
    </location>
</feature>
<feature type="region of interest" description="Flexible linker" evidence="1">
    <location>
        <begin position="144"/>
        <end position="150"/>
    </location>
</feature>
<feature type="region of interest" description="Domain III" evidence="1">
    <location>
        <begin position="151"/>
        <end position="203"/>
    </location>
</feature>
<accession>B3EFD2</accession>
<keyword id="KW-0963">Cytoplasm</keyword>
<keyword id="KW-0227">DNA damage</keyword>
<keyword id="KW-0233">DNA recombination</keyword>
<keyword id="KW-0234">DNA repair</keyword>
<keyword id="KW-0238">DNA-binding</keyword>
<sequence length="203" mass="21712">MFAYFRGRLTSAMPDEAVVDVSGIGYRFLVSAFTYRQLPPPGEDVLLYAHLSVKEDAFLLYGFSSESERQLFRLLLLTTGVGPKLALAVLSGLQVHEVHEAIMANAPERLYGISGVGKKTAARIILELRDRILKMSPDGGKTIASGSGGNLALQIKDDALNALITLGFSKPAAQKAVTGILEGNPSLSVEEVVKSALVSIHNS</sequence>